<reference key="1">
    <citation type="submission" date="2007-06" db="EMBL/GenBank/DDBJ databases">
        <title>Complete sequence of Methanococcus aeolicus Nankai-3.</title>
        <authorList>
            <consortium name="US DOE Joint Genome Institute"/>
            <person name="Copeland A."/>
            <person name="Lucas S."/>
            <person name="Lapidus A."/>
            <person name="Barry K."/>
            <person name="Glavina del Rio T."/>
            <person name="Dalin E."/>
            <person name="Tice H."/>
            <person name="Pitluck S."/>
            <person name="Chain P."/>
            <person name="Malfatti S."/>
            <person name="Shin M."/>
            <person name="Vergez L."/>
            <person name="Schmutz J."/>
            <person name="Larimer F."/>
            <person name="Land M."/>
            <person name="Hauser L."/>
            <person name="Kyrpides N."/>
            <person name="Lykidis A."/>
            <person name="Sieprawska-Lupa M."/>
            <person name="Whitman W.B."/>
            <person name="Richardson P."/>
        </authorList>
    </citation>
    <scope>NUCLEOTIDE SEQUENCE [LARGE SCALE GENOMIC DNA]</scope>
    <source>
        <strain>ATCC BAA-1280 / DSM 17508 / OCM 812 / Nankai-3</strain>
    </source>
</reference>
<dbReference type="EC" id="2.1.1.-" evidence="1"/>
<dbReference type="EMBL" id="CP000743">
    <property type="protein sequence ID" value="ABR55963.1"/>
    <property type="molecule type" value="Genomic_DNA"/>
</dbReference>
<dbReference type="RefSeq" id="WP_011973095.1">
    <property type="nucleotide sequence ID" value="NC_009635.1"/>
</dbReference>
<dbReference type="SMR" id="A6UTZ1"/>
<dbReference type="STRING" id="419665.Maeo_0376"/>
<dbReference type="GeneID" id="5327474"/>
<dbReference type="KEGG" id="mae:Maeo_0376"/>
<dbReference type="eggNOG" id="arCOG04131">
    <property type="taxonomic scope" value="Archaea"/>
</dbReference>
<dbReference type="HOGENOM" id="CLU_041220_0_2_2"/>
<dbReference type="OrthoDB" id="9883at2157"/>
<dbReference type="Proteomes" id="UP000001106">
    <property type="component" value="Chromosome"/>
</dbReference>
<dbReference type="GO" id="GO:0005737">
    <property type="term" value="C:cytoplasm"/>
    <property type="evidence" value="ECO:0007669"/>
    <property type="project" value="UniProtKB-SubCell"/>
</dbReference>
<dbReference type="GO" id="GO:0003723">
    <property type="term" value="F:RNA binding"/>
    <property type="evidence" value="ECO:0007669"/>
    <property type="project" value="UniProtKB-KW"/>
</dbReference>
<dbReference type="GO" id="GO:0000179">
    <property type="term" value="F:rRNA (adenine-N6,N6-)-dimethyltransferase activity"/>
    <property type="evidence" value="ECO:0007669"/>
    <property type="project" value="InterPro"/>
</dbReference>
<dbReference type="CDD" id="cd02440">
    <property type="entry name" value="AdoMet_MTases"/>
    <property type="match status" value="1"/>
</dbReference>
<dbReference type="FunFam" id="3.40.50.150:FF:000023">
    <property type="entry name" value="Ribosomal RNA small subunit methyltransferase A"/>
    <property type="match status" value="1"/>
</dbReference>
<dbReference type="Gene3D" id="1.10.8.100">
    <property type="entry name" value="Ribosomal RNA adenine dimethylase-like, domain 2"/>
    <property type="match status" value="1"/>
</dbReference>
<dbReference type="Gene3D" id="3.40.50.150">
    <property type="entry name" value="Vaccinia Virus protein VP39"/>
    <property type="match status" value="1"/>
</dbReference>
<dbReference type="HAMAP" id="MF_00607">
    <property type="entry name" value="16SrRNA_methyltr_A"/>
    <property type="match status" value="1"/>
</dbReference>
<dbReference type="InterPro" id="IPR001737">
    <property type="entry name" value="KsgA/Erm"/>
</dbReference>
<dbReference type="InterPro" id="IPR023165">
    <property type="entry name" value="rRNA_Ade_diMease-like_C"/>
</dbReference>
<dbReference type="InterPro" id="IPR020596">
    <property type="entry name" value="rRNA_Ade_Mease_Trfase_CS"/>
</dbReference>
<dbReference type="InterPro" id="IPR020598">
    <property type="entry name" value="rRNA_Ade_methylase_Trfase_N"/>
</dbReference>
<dbReference type="InterPro" id="IPR011530">
    <property type="entry name" value="rRNA_adenine_dimethylase"/>
</dbReference>
<dbReference type="InterPro" id="IPR029063">
    <property type="entry name" value="SAM-dependent_MTases_sf"/>
</dbReference>
<dbReference type="NCBIfam" id="TIGR00755">
    <property type="entry name" value="ksgA"/>
    <property type="match status" value="1"/>
</dbReference>
<dbReference type="PANTHER" id="PTHR11727">
    <property type="entry name" value="DIMETHYLADENOSINE TRANSFERASE"/>
    <property type="match status" value="1"/>
</dbReference>
<dbReference type="PANTHER" id="PTHR11727:SF7">
    <property type="entry name" value="DIMETHYLADENOSINE TRANSFERASE-RELATED"/>
    <property type="match status" value="1"/>
</dbReference>
<dbReference type="Pfam" id="PF00398">
    <property type="entry name" value="RrnaAD"/>
    <property type="match status" value="1"/>
</dbReference>
<dbReference type="SMART" id="SM00650">
    <property type="entry name" value="rADc"/>
    <property type="match status" value="1"/>
</dbReference>
<dbReference type="SUPFAM" id="SSF53335">
    <property type="entry name" value="S-adenosyl-L-methionine-dependent methyltransferases"/>
    <property type="match status" value="1"/>
</dbReference>
<dbReference type="PROSITE" id="PS01131">
    <property type="entry name" value="RRNA_A_DIMETH"/>
    <property type="match status" value="1"/>
</dbReference>
<dbReference type="PROSITE" id="PS51689">
    <property type="entry name" value="SAM_RNA_A_N6_MT"/>
    <property type="match status" value="1"/>
</dbReference>
<sequence>MQQNKKLGQCFLKDKNIVKKAINAANINKNDIVLEIGLGKGILTKELAKQCKKVIVIELDKKLEIFWEDIIKEYPNVEIIWNDALKVNLKELGFNKVVANLPYQISSPITFKLLDCDFEVAVLMYQYEFAKRMGAPSGTKEYSRLSVSVQYRAVVDYVCKVSPSAFSPKPKVDSAIVKITKKNEPIHNIDNWEFFDGFNRALFQHRNKNTKKALIHSAHEINMDRDKLKELLNSNEIMEFNDLLGKKVYTLSLKEIGVLCNNLYKIINKSK</sequence>
<keyword id="KW-0963">Cytoplasm</keyword>
<keyword id="KW-0489">Methyltransferase</keyword>
<keyword id="KW-0694">RNA-binding</keyword>
<keyword id="KW-0698">rRNA processing</keyword>
<keyword id="KW-0949">S-adenosyl-L-methionine</keyword>
<keyword id="KW-0808">Transferase</keyword>
<gene>
    <name evidence="1" type="primary">rsmA</name>
    <name evidence="1" type="synonym">ksgA</name>
    <name type="ordered locus">Maeo_0376</name>
</gene>
<feature type="chain" id="PRO_1000056634" description="Probable ribosomal RNA small subunit methyltransferase A">
    <location>
        <begin position="1"/>
        <end position="271"/>
    </location>
</feature>
<feature type="binding site" evidence="1">
    <location>
        <position position="12"/>
    </location>
    <ligand>
        <name>S-adenosyl-L-methionine</name>
        <dbReference type="ChEBI" id="CHEBI:59789"/>
    </ligand>
</feature>
<feature type="binding site" evidence="1">
    <location>
        <position position="37"/>
    </location>
    <ligand>
        <name>S-adenosyl-L-methionine</name>
        <dbReference type="ChEBI" id="CHEBI:59789"/>
    </ligand>
</feature>
<feature type="binding site" evidence="1">
    <location>
        <position position="58"/>
    </location>
    <ligand>
        <name>S-adenosyl-L-methionine</name>
        <dbReference type="ChEBI" id="CHEBI:59789"/>
    </ligand>
</feature>
<feature type="binding site" evidence="1">
    <location>
        <position position="83"/>
    </location>
    <ligand>
        <name>S-adenosyl-L-methionine</name>
        <dbReference type="ChEBI" id="CHEBI:59789"/>
    </ligand>
</feature>
<feature type="binding site" evidence="1">
    <location>
        <position position="100"/>
    </location>
    <ligand>
        <name>S-adenosyl-L-methionine</name>
        <dbReference type="ChEBI" id="CHEBI:59789"/>
    </ligand>
</feature>
<name>RSMA_META3</name>
<protein>
    <recommendedName>
        <fullName evidence="1">Probable ribosomal RNA small subunit methyltransferase A</fullName>
        <ecNumber evidence="1">2.1.1.-</ecNumber>
    </recommendedName>
    <alternativeName>
        <fullName evidence="1">16S rRNA dimethyladenosine transferase</fullName>
    </alternativeName>
    <alternativeName>
        <fullName evidence="1">16S rRNA dimethylase</fullName>
    </alternativeName>
    <alternativeName>
        <fullName evidence="1">S-adenosylmethionine-6-N',N'-adenosyl(rRNA) dimethyltransferase</fullName>
    </alternativeName>
</protein>
<accession>A6UTZ1</accession>
<comment type="function">
    <text evidence="1">Specifically dimethylates two adjacent adenosines in the loop of a conserved hairpin near the 3'-end of 16S rRNA in the 30S particle. May play a critical role in biogenesis of 30S subunits.</text>
</comment>
<comment type="subcellular location">
    <subcellularLocation>
        <location evidence="1">Cytoplasm</location>
    </subcellularLocation>
</comment>
<comment type="similarity">
    <text evidence="1">Belongs to the class I-like SAM-binding methyltransferase superfamily. rRNA adenine N(6)-methyltransferase family. RsmA subfamily.</text>
</comment>
<evidence type="ECO:0000255" key="1">
    <source>
        <dbReference type="HAMAP-Rule" id="MF_00607"/>
    </source>
</evidence>
<proteinExistence type="inferred from homology"/>
<organism>
    <name type="scientific">Methanococcus aeolicus (strain ATCC BAA-1280 / DSM 17508 / OCM 812 / Nankai-3)</name>
    <dbReference type="NCBI Taxonomy" id="419665"/>
    <lineage>
        <taxon>Archaea</taxon>
        <taxon>Methanobacteriati</taxon>
        <taxon>Methanobacteriota</taxon>
        <taxon>Methanomada group</taxon>
        <taxon>Methanococci</taxon>
        <taxon>Methanococcales</taxon>
        <taxon>Methanococcaceae</taxon>
        <taxon>Methanococcus</taxon>
    </lineage>
</organism>